<organism>
    <name type="scientific">Shigella flexneri serotype 5b (strain 8401)</name>
    <dbReference type="NCBI Taxonomy" id="373384"/>
    <lineage>
        <taxon>Bacteria</taxon>
        <taxon>Pseudomonadati</taxon>
        <taxon>Pseudomonadota</taxon>
        <taxon>Gammaproteobacteria</taxon>
        <taxon>Enterobacterales</taxon>
        <taxon>Enterobacteriaceae</taxon>
        <taxon>Shigella</taxon>
    </lineage>
</organism>
<protein>
    <recommendedName>
        <fullName evidence="1">Sulfate transporter CysZ</fullName>
    </recommendedName>
</protein>
<dbReference type="EMBL" id="CP000266">
    <property type="protein sequence ID" value="ABF04569.1"/>
    <property type="molecule type" value="Genomic_DNA"/>
</dbReference>
<dbReference type="RefSeq" id="WP_000254830.1">
    <property type="nucleotide sequence ID" value="NC_008258.1"/>
</dbReference>
<dbReference type="SMR" id="Q0T296"/>
<dbReference type="KEGG" id="sfv:SFV_2465"/>
<dbReference type="HOGENOM" id="CLU_070331_1_0_6"/>
<dbReference type="Proteomes" id="UP000000659">
    <property type="component" value="Chromosome"/>
</dbReference>
<dbReference type="GO" id="GO:0005886">
    <property type="term" value="C:plasma membrane"/>
    <property type="evidence" value="ECO:0007669"/>
    <property type="project" value="UniProtKB-SubCell"/>
</dbReference>
<dbReference type="GO" id="GO:0009675">
    <property type="term" value="F:high-affinity sulfate:proton symporter activity"/>
    <property type="evidence" value="ECO:0007669"/>
    <property type="project" value="TreeGrafter"/>
</dbReference>
<dbReference type="GO" id="GO:0019344">
    <property type="term" value="P:cysteine biosynthetic process"/>
    <property type="evidence" value="ECO:0007669"/>
    <property type="project" value="UniProtKB-UniRule"/>
</dbReference>
<dbReference type="GO" id="GO:0000103">
    <property type="term" value="P:sulfate assimilation"/>
    <property type="evidence" value="ECO:0007669"/>
    <property type="project" value="InterPro"/>
</dbReference>
<dbReference type="HAMAP" id="MF_00468">
    <property type="entry name" value="CysZ"/>
    <property type="match status" value="1"/>
</dbReference>
<dbReference type="InterPro" id="IPR050480">
    <property type="entry name" value="CysZ_sulfate_transptr"/>
</dbReference>
<dbReference type="InterPro" id="IPR022985">
    <property type="entry name" value="Sulfate_CysZ"/>
</dbReference>
<dbReference type="NCBIfam" id="NF003433">
    <property type="entry name" value="PRK04949.1"/>
    <property type="match status" value="1"/>
</dbReference>
<dbReference type="PANTHER" id="PTHR37468">
    <property type="entry name" value="SULFATE TRANSPORTER CYSZ"/>
    <property type="match status" value="1"/>
</dbReference>
<dbReference type="PANTHER" id="PTHR37468:SF1">
    <property type="entry name" value="SULFATE TRANSPORTER CYSZ"/>
    <property type="match status" value="1"/>
</dbReference>
<dbReference type="Pfam" id="PF07264">
    <property type="entry name" value="EI24"/>
    <property type="match status" value="1"/>
</dbReference>
<sequence>MVSSFTSAPRSGFYYFAQGWKLVSQPGIRRFVILPLLVNILLMGGAFWWLFTQLDVWIPTFMSYVPDWLQWLSYLLWPLAVISVLLVFGYFFSTIANWIAAPFNGLLAEQLEARLTGATPPDTGIFGIMKDVPRIMKREWQKFVWYLPRAIVLLILYFIPGIGQTVAPVLWFLFSAWMLAIQYCDYPFDNHKVPFKEMRTALRTRKITNMQFGALTSLFTMIPLLNLFIMPVAVCGATAMWVDCYRDKHAMWR</sequence>
<reference key="1">
    <citation type="journal article" date="2006" name="BMC Genomics">
        <title>Complete genome sequence of Shigella flexneri 5b and comparison with Shigella flexneri 2a.</title>
        <authorList>
            <person name="Nie H."/>
            <person name="Yang F."/>
            <person name="Zhang X."/>
            <person name="Yang J."/>
            <person name="Chen L."/>
            <person name="Wang J."/>
            <person name="Xiong Z."/>
            <person name="Peng J."/>
            <person name="Sun L."/>
            <person name="Dong J."/>
            <person name="Xue Y."/>
            <person name="Xu X."/>
            <person name="Chen S."/>
            <person name="Yao Z."/>
            <person name="Shen Y."/>
            <person name="Jin Q."/>
        </authorList>
    </citation>
    <scope>NUCLEOTIDE SEQUENCE [LARGE SCALE GENOMIC DNA]</scope>
    <source>
        <strain>8401</strain>
    </source>
</reference>
<keyword id="KW-0028">Amino-acid biosynthesis</keyword>
<keyword id="KW-0997">Cell inner membrane</keyword>
<keyword id="KW-1003">Cell membrane</keyword>
<keyword id="KW-0198">Cysteine biosynthesis</keyword>
<keyword id="KW-0472">Membrane</keyword>
<keyword id="KW-0764">Sulfate transport</keyword>
<keyword id="KW-0812">Transmembrane</keyword>
<keyword id="KW-1133">Transmembrane helix</keyword>
<keyword id="KW-0813">Transport</keyword>
<accession>Q0T296</accession>
<comment type="function">
    <text evidence="1">High affinity, high specificity proton-dependent sulfate transporter, which mediates sulfate uptake. Provides the sulfur source for the cysteine synthesis pathway.</text>
</comment>
<comment type="subcellular location">
    <subcellularLocation>
        <location evidence="1">Cell inner membrane</location>
        <topology evidence="1">Multi-pass membrane protein</topology>
    </subcellularLocation>
</comment>
<comment type="similarity">
    <text evidence="1">Belongs to the CysZ family.</text>
</comment>
<evidence type="ECO:0000255" key="1">
    <source>
        <dbReference type="HAMAP-Rule" id="MF_00468"/>
    </source>
</evidence>
<name>CYSZ_SHIF8</name>
<feature type="chain" id="PRO_1000013719" description="Sulfate transporter CysZ">
    <location>
        <begin position="1"/>
        <end position="253"/>
    </location>
</feature>
<feature type="transmembrane region" description="Helical" evidence="1">
    <location>
        <begin position="31"/>
        <end position="51"/>
    </location>
</feature>
<feature type="transmembrane region" description="Helical" evidence="1">
    <location>
        <begin position="75"/>
        <end position="95"/>
    </location>
</feature>
<feature type="transmembrane region" description="Helical" evidence="1">
    <location>
        <begin position="151"/>
        <end position="171"/>
    </location>
</feature>
<feature type="transmembrane region" description="Helical" evidence="1">
    <location>
        <begin position="222"/>
        <end position="242"/>
    </location>
</feature>
<proteinExistence type="inferred from homology"/>
<gene>
    <name evidence="1" type="primary">cysZ</name>
    <name type="ordered locus">SFV_2465</name>
</gene>